<protein>
    <recommendedName>
        <fullName evidence="1">Uracil-DNA glycosylase</fullName>
        <shortName evidence="1">UDG</shortName>
        <ecNumber evidence="1">3.2.2.27</ecNumber>
    </recommendedName>
</protein>
<evidence type="ECO:0000255" key="1">
    <source>
        <dbReference type="HAMAP-Rule" id="MF_00148"/>
    </source>
</evidence>
<gene>
    <name evidence="1" type="primary">ung</name>
    <name type="ordered locus">FTM_0321</name>
</gene>
<organism>
    <name type="scientific">Francisella tularensis subsp. mediasiatica (strain FSC147)</name>
    <dbReference type="NCBI Taxonomy" id="441952"/>
    <lineage>
        <taxon>Bacteria</taxon>
        <taxon>Pseudomonadati</taxon>
        <taxon>Pseudomonadota</taxon>
        <taxon>Gammaproteobacteria</taxon>
        <taxon>Thiotrichales</taxon>
        <taxon>Francisellaceae</taxon>
        <taxon>Francisella</taxon>
    </lineage>
</organism>
<proteinExistence type="inferred from homology"/>
<sequence length="220" mass="25298">MTWSDILAEEKQKPYFKQILDFLACESAKGKVIFPTKENIFNAFKYTELDNLKVVILGQDPYHNYNQAHGLAFSVQKGVDIPPSLQNIYKELARSIPEFKTPNHGYLVDWAKQGVFLLNTTLTVEAHKANSHKDIGWETFTDTVINKISENKHNVVFMLWGSHARKKKVLIDSSRHLILESTHPSPLSAHRGFLGCNHFVDCNKYLIEKKDQKIDWNLLC</sequence>
<keyword id="KW-0963">Cytoplasm</keyword>
<keyword id="KW-0227">DNA damage</keyword>
<keyword id="KW-0234">DNA repair</keyword>
<keyword id="KW-0378">Hydrolase</keyword>
<feature type="chain" id="PRO_1000096583" description="Uracil-DNA glycosylase">
    <location>
        <begin position="1"/>
        <end position="220"/>
    </location>
</feature>
<feature type="active site" description="Proton acceptor" evidence="1">
    <location>
        <position position="60"/>
    </location>
</feature>
<reference key="1">
    <citation type="journal article" date="2009" name="PLoS Pathog.">
        <title>Molecular evolutionary consequences of niche restriction in Francisella tularensis, a facultative intracellular pathogen.</title>
        <authorList>
            <person name="Larsson P."/>
            <person name="Elfsmark D."/>
            <person name="Svensson K."/>
            <person name="Wikstroem P."/>
            <person name="Forsman M."/>
            <person name="Brettin T."/>
            <person name="Keim P."/>
            <person name="Johansson A."/>
        </authorList>
    </citation>
    <scope>NUCLEOTIDE SEQUENCE [LARGE SCALE GENOMIC DNA]</scope>
    <source>
        <strain>FSC147</strain>
    </source>
</reference>
<dbReference type="EC" id="3.2.2.27" evidence="1"/>
<dbReference type="EMBL" id="CP000915">
    <property type="protein sequence ID" value="ACD30375.1"/>
    <property type="molecule type" value="Genomic_DNA"/>
</dbReference>
<dbReference type="SMR" id="B2SFW5"/>
<dbReference type="KEGG" id="ftm:FTM_0321"/>
<dbReference type="HOGENOM" id="CLU_032162_3_1_6"/>
<dbReference type="GO" id="GO:0005737">
    <property type="term" value="C:cytoplasm"/>
    <property type="evidence" value="ECO:0007669"/>
    <property type="project" value="UniProtKB-SubCell"/>
</dbReference>
<dbReference type="GO" id="GO:0004844">
    <property type="term" value="F:uracil DNA N-glycosylase activity"/>
    <property type="evidence" value="ECO:0007669"/>
    <property type="project" value="UniProtKB-UniRule"/>
</dbReference>
<dbReference type="GO" id="GO:0097510">
    <property type="term" value="P:base-excision repair, AP site formation via deaminated base removal"/>
    <property type="evidence" value="ECO:0007669"/>
    <property type="project" value="TreeGrafter"/>
</dbReference>
<dbReference type="CDD" id="cd10027">
    <property type="entry name" value="UDG-F1-like"/>
    <property type="match status" value="1"/>
</dbReference>
<dbReference type="FunFam" id="3.40.470.10:FF:000001">
    <property type="entry name" value="Uracil-DNA glycosylase"/>
    <property type="match status" value="1"/>
</dbReference>
<dbReference type="Gene3D" id="3.40.470.10">
    <property type="entry name" value="Uracil-DNA glycosylase-like domain"/>
    <property type="match status" value="1"/>
</dbReference>
<dbReference type="HAMAP" id="MF_00148">
    <property type="entry name" value="UDG"/>
    <property type="match status" value="1"/>
</dbReference>
<dbReference type="InterPro" id="IPR002043">
    <property type="entry name" value="UDG_fam1"/>
</dbReference>
<dbReference type="InterPro" id="IPR018085">
    <property type="entry name" value="Ura-DNA_Glyclase_AS"/>
</dbReference>
<dbReference type="InterPro" id="IPR005122">
    <property type="entry name" value="Uracil-DNA_glycosylase-like"/>
</dbReference>
<dbReference type="InterPro" id="IPR036895">
    <property type="entry name" value="Uracil-DNA_glycosylase-like_sf"/>
</dbReference>
<dbReference type="NCBIfam" id="NF003588">
    <property type="entry name" value="PRK05254.1-1"/>
    <property type="match status" value="1"/>
</dbReference>
<dbReference type="NCBIfam" id="NF003589">
    <property type="entry name" value="PRK05254.1-2"/>
    <property type="match status" value="1"/>
</dbReference>
<dbReference type="NCBIfam" id="NF003591">
    <property type="entry name" value="PRK05254.1-4"/>
    <property type="match status" value="1"/>
</dbReference>
<dbReference type="NCBIfam" id="NF003592">
    <property type="entry name" value="PRK05254.1-5"/>
    <property type="match status" value="1"/>
</dbReference>
<dbReference type="NCBIfam" id="TIGR00628">
    <property type="entry name" value="ung"/>
    <property type="match status" value="1"/>
</dbReference>
<dbReference type="PANTHER" id="PTHR11264">
    <property type="entry name" value="URACIL-DNA GLYCOSYLASE"/>
    <property type="match status" value="1"/>
</dbReference>
<dbReference type="PANTHER" id="PTHR11264:SF0">
    <property type="entry name" value="URACIL-DNA GLYCOSYLASE"/>
    <property type="match status" value="1"/>
</dbReference>
<dbReference type="Pfam" id="PF03167">
    <property type="entry name" value="UDG"/>
    <property type="match status" value="1"/>
</dbReference>
<dbReference type="SMART" id="SM00986">
    <property type="entry name" value="UDG"/>
    <property type="match status" value="1"/>
</dbReference>
<dbReference type="SMART" id="SM00987">
    <property type="entry name" value="UreE_C"/>
    <property type="match status" value="1"/>
</dbReference>
<dbReference type="SUPFAM" id="SSF52141">
    <property type="entry name" value="Uracil-DNA glycosylase-like"/>
    <property type="match status" value="1"/>
</dbReference>
<dbReference type="PROSITE" id="PS00130">
    <property type="entry name" value="U_DNA_GLYCOSYLASE"/>
    <property type="match status" value="1"/>
</dbReference>
<name>UNG_FRATM</name>
<comment type="function">
    <text evidence="1">Excises uracil residues from the DNA which can arise as a result of misincorporation of dUMP residues by DNA polymerase or due to deamination of cytosine.</text>
</comment>
<comment type="catalytic activity">
    <reaction evidence="1">
        <text>Hydrolyzes single-stranded DNA or mismatched double-stranded DNA and polynucleotides, releasing free uracil.</text>
        <dbReference type="EC" id="3.2.2.27"/>
    </reaction>
</comment>
<comment type="subcellular location">
    <subcellularLocation>
        <location evidence="1">Cytoplasm</location>
    </subcellularLocation>
</comment>
<comment type="similarity">
    <text evidence="1">Belongs to the uracil-DNA glycosylase (UDG) superfamily. UNG family.</text>
</comment>
<accession>B2SFW5</accession>